<keyword id="KW-0067">ATP-binding</keyword>
<keyword id="KW-0547">Nucleotide-binding</keyword>
<keyword id="KW-1185">Reference proteome</keyword>
<keyword id="KW-0808">Transferase</keyword>
<keyword id="KW-0833">Ubl conjugation pathway</keyword>
<organism>
    <name type="scientific">Pyricularia oryzae (strain 70-15 / ATCC MYA-4617 / FGSC 8958)</name>
    <name type="common">Rice blast fungus</name>
    <name type="synonym">Magnaporthe oryzae</name>
    <dbReference type="NCBI Taxonomy" id="242507"/>
    <lineage>
        <taxon>Eukaryota</taxon>
        <taxon>Fungi</taxon>
        <taxon>Dikarya</taxon>
        <taxon>Ascomycota</taxon>
        <taxon>Pezizomycotina</taxon>
        <taxon>Sordariomycetes</taxon>
        <taxon>Sordariomycetidae</taxon>
        <taxon>Magnaporthales</taxon>
        <taxon>Pyriculariaceae</taxon>
        <taxon>Pyricularia</taxon>
    </lineage>
</organism>
<proteinExistence type="inferred from homology"/>
<protein>
    <recommendedName>
        <fullName>Ubiquitin-conjugating enzyme E2-16 kDa</fullName>
        <ecNumber>2.3.2.23</ecNumber>
    </recommendedName>
    <alternativeName>
        <fullName>E2 ubiquitin-conjugating enzyme 1</fullName>
    </alternativeName>
    <alternativeName>
        <fullName>Ubiquitin carrier protein</fullName>
    </alternativeName>
    <alternativeName>
        <fullName>Ubiquitin-protein ligase</fullName>
    </alternativeName>
</protein>
<dbReference type="EC" id="2.3.2.23"/>
<dbReference type="EMBL" id="AF161722">
    <property type="protein sequence ID" value="AAD55983.1"/>
    <property type="molecule type" value="Genomic_DNA"/>
</dbReference>
<dbReference type="EMBL" id="CM001234">
    <property type="protein sequence ID" value="EHA50659.1"/>
    <property type="molecule type" value="Genomic_DNA"/>
</dbReference>
<dbReference type="RefSeq" id="XP_003716978.1">
    <property type="nucleotide sequence ID" value="XM_003716930.1"/>
</dbReference>
<dbReference type="SMR" id="Q9UVR2"/>
<dbReference type="FunCoup" id="Q9UVR2">
    <property type="interactions" value="936"/>
</dbReference>
<dbReference type="STRING" id="242507.Q9UVR2"/>
<dbReference type="EnsemblFungi" id="MGG_06562T0">
    <property type="protein sequence ID" value="MGG_06562T0"/>
    <property type="gene ID" value="MGG_06562"/>
</dbReference>
<dbReference type="GeneID" id="2684717"/>
<dbReference type="KEGG" id="mgr:MGG_06562"/>
<dbReference type="VEuPathDB" id="FungiDB:MGG_06562"/>
<dbReference type="eggNOG" id="KOG0417">
    <property type="taxonomic scope" value="Eukaryota"/>
</dbReference>
<dbReference type="HOGENOM" id="CLU_030988_13_3_1"/>
<dbReference type="InParanoid" id="Q9UVR2"/>
<dbReference type="OMA" id="VHFTTRI"/>
<dbReference type="OrthoDB" id="7851174at2759"/>
<dbReference type="UniPathway" id="UPA00143"/>
<dbReference type="Proteomes" id="UP000009058">
    <property type="component" value="Chromosome 4"/>
</dbReference>
<dbReference type="GO" id="GO:0005524">
    <property type="term" value="F:ATP binding"/>
    <property type="evidence" value="ECO:0007669"/>
    <property type="project" value="UniProtKB-KW"/>
</dbReference>
<dbReference type="GO" id="GO:0061631">
    <property type="term" value="F:ubiquitin conjugating enzyme activity"/>
    <property type="evidence" value="ECO:0007669"/>
    <property type="project" value="UniProtKB-EC"/>
</dbReference>
<dbReference type="GO" id="GO:0016567">
    <property type="term" value="P:protein ubiquitination"/>
    <property type="evidence" value="ECO:0007669"/>
    <property type="project" value="UniProtKB-UniPathway"/>
</dbReference>
<dbReference type="CDD" id="cd23792">
    <property type="entry name" value="UBCc_UBE2D"/>
    <property type="match status" value="1"/>
</dbReference>
<dbReference type="FunFam" id="3.10.110.10:FF:000010">
    <property type="entry name" value="Ubiquitin-conjugating enzyme E2-16 kDa"/>
    <property type="match status" value="1"/>
</dbReference>
<dbReference type="Gene3D" id="3.10.110.10">
    <property type="entry name" value="Ubiquitin Conjugating Enzyme"/>
    <property type="match status" value="1"/>
</dbReference>
<dbReference type="InterPro" id="IPR000608">
    <property type="entry name" value="UBQ-conjugat_E2_core"/>
</dbReference>
<dbReference type="InterPro" id="IPR023313">
    <property type="entry name" value="UBQ-conjugating_AS"/>
</dbReference>
<dbReference type="InterPro" id="IPR016135">
    <property type="entry name" value="UBQ-conjugating_enzyme/RWD"/>
</dbReference>
<dbReference type="PANTHER" id="PTHR24068">
    <property type="entry name" value="UBIQUITIN-CONJUGATING ENZYME E2"/>
    <property type="match status" value="1"/>
</dbReference>
<dbReference type="Pfam" id="PF00179">
    <property type="entry name" value="UQ_con"/>
    <property type="match status" value="1"/>
</dbReference>
<dbReference type="SMART" id="SM00212">
    <property type="entry name" value="UBCc"/>
    <property type="match status" value="1"/>
</dbReference>
<dbReference type="SUPFAM" id="SSF54495">
    <property type="entry name" value="UBC-like"/>
    <property type="match status" value="1"/>
</dbReference>
<dbReference type="PROSITE" id="PS00183">
    <property type="entry name" value="UBC_1"/>
    <property type="match status" value="1"/>
</dbReference>
<dbReference type="PROSITE" id="PS50127">
    <property type="entry name" value="UBC_2"/>
    <property type="match status" value="1"/>
</dbReference>
<comment type="function">
    <text evidence="1">Catalyzes the covalent attachment of ubiquitin to other proteins.</text>
</comment>
<comment type="catalytic activity">
    <reaction evidence="1 2">
        <text>S-ubiquitinyl-[E1 ubiquitin-activating enzyme]-L-cysteine + [E2 ubiquitin-conjugating enzyme]-L-cysteine = [E1 ubiquitin-activating enzyme]-L-cysteine + S-ubiquitinyl-[E2 ubiquitin-conjugating enzyme]-L-cysteine.</text>
        <dbReference type="EC" id="2.3.2.23"/>
    </reaction>
</comment>
<comment type="pathway">
    <text evidence="1">Protein modification; protein ubiquitination.</text>
</comment>
<comment type="similarity">
    <text evidence="1">Belongs to the ubiquitin-conjugating enzyme family.</text>
</comment>
<sequence length="147" mass="16438">MALKRINKELTDLGRDPPSSCSAGPVGEDLFHWQATIMGPSDSPYAGGVFFLAIHFPTDYPFKPPKVNFTTRIYHPNINSNGSICLDILRDQWSPALTISKVLLSICSMLTDPNPDDPLVPEIAHVYKTARAQYESTAREWTRKYAI</sequence>
<name>UBC1_PYRO7</name>
<reference key="1">
    <citation type="submission" date="1999-06" db="EMBL/GenBank/DDBJ databases">
        <title>Identification of a ubiquitin-conjugating enzyme of the rice blast fungus Magnaporthe grisea.</title>
        <authorList>
            <person name="Kim Y.-K."/>
            <person name="Kolattukudy P.E."/>
        </authorList>
    </citation>
    <scope>NUCLEOTIDE SEQUENCE [GENOMIC DNA]</scope>
</reference>
<reference key="2">
    <citation type="journal article" date="2005" name="Nature">
        <title>The genome sequence of the rice blast fungus Magnaporthe grisea.</title>
        <authorList>
            <person name="Dean R.A."/>
            <person name="Talbot N.J."/>
            <person name="Ebbole D.J."/>
            <person name="Farman M.L."/>
            <person name="Mitchell T.K."/>
            <person name="Orbach M.J."/>
            <person name="Thon M.R."/>
            <person name="Kulkarni R."/>
            <person name="Xu J.-R."/>
            <person name="Pan H."/>
            <person name="Read N.D."/>
            <person name="Lee Y.-H."/>
            <person name="Carbone I."/>
            <person name="Brown D."/>
            <person name="Oh Y.Y."/>
            <person name="Donofrio N."/>
            <person name="Jeong J.S."/>
            <person name="Soanes D.M."/>
            <person name="Djonovic S."/>
            <person name="Kolomiets E."/>
            <person name="Rehmeyer C."/>
            <person name="Li W."/>
            <person name="Harding M."/>
            <person name="Kim S."/>
            <person name="Lebrun M.-H."/>
            <person name="Bohnert H."/>
            <person name="Coughlan S."/>
            <person name="Butler J."/>
            <person name="Calvo S.E."/>
            <person name="Ma L.-J."/>
            <person name="Nicol R."/>
            <person name="Purcell S."/>
            <person name="Nusbaum C."/>
            <person name="Galagan J.E."/>
            <person name="Birren B.W."/>
        </authorList>
    </citation>
    <scope>NUCLEOTIDE SEQUENCE [LARGE SCALE GENOMIC DNA]</scope>
    <source>
        <strain>70-15 / ATCC MYA-4617 / FGSC 8958</strain>
    </source>
</reference>
<gene>
    <name type="primary">UBC1</name>
    <name type="ORF">MGG_06562</name>
</gene>
<accession>Q9UVR2</accession>
<accession>A4R868</accession>
<accession>G4N6D7</accession>
<evidence type="ECO:0000255" key="1">
    <source>
        <dbReference type="PROSITE-ProRule" id="PRU00388"/>
    </source>
</evidence>
<evidence type="ECO:0000255" key="2">
    <source>
        <dbReference type="PROSITE-ProRule" id="PRU10133"/>
    </source>
</evidence>
<evidence type="ECO:0000305" key="3"/>
<feature type="chain" id="PRO_0000082543" description="Ubiquitin-conjugating enzyme E2-16 kDa">
    <location>
        <begin position="1"/>
        <end position="147"/>
    </location>
</feature>
<feature type="domain" description="UBC core" evidence="1">
    <location>
        <begin position="1"/>
        <end position="147"/>
    </location>
</feature>
<feature type="active site" description="Glycyl thioester intermediate" evidence="1 2">
    <location>
        <position position="107"/>
    </location>
</feature>
<feature type="sequence conflict" description="In Ref. 1; AAD55983." evidence="3" ref="1">
    <original>K</original>
    <variation>R</variation>
    <location>
        <position position="128"/>
    </location>
</feature>
<feature type="sequence conflict" description="In Ref. 1; AAD55983." evidence="3" ref="1">
    <original>S</original>
    <variation>A</variation>
    <location>
        <position position="136"/>
    </location>
</feature>
<feature type="sequence conflict" description="In Ref. 1; AAD55983." evidence="3" ref="1">
    <original>R</original>
    <variation>P</variation>
    <location>
        <position position="143"/>
    </location>
</feature>